<evidence type="ECO:0000250" key="1">
    <source>
        <dbReference type="UniProtKB" id="O70325"/>
    </source>
</evidence>
<evidence type="ECO:0000250" key="2">
    <source>
        <dbReference type="UniProtKB" id="P36968"/>
    </source>
</evidence>
<evidence type="ECO:0000255" key="3"/>
<evidence type="ECO:0000305" key="4"/>
<organism>
    <name type="scientific">Pisum sativum</name>
    <name type="common">Garden pea</name>
    <name type="synonym">Lathyrus oleraceus</name>
    <dbReference type="NCBI Taxonomy" id="3888"/>
    <lineage>
        <taxon>Eukaryota</taxon>
        <taxon>Viridiplantae</taxon>
        <taxon>Streptophyta</taxon>
        <taxon>Embryophyta</taxon>
        <taxon>Tracheophyta</taxon>
        <taxon>Spermatophyta</taxon>
        <taxon>Magnoliopsida</taxon>
        <taxon>eudicotyledons</taxon>
        <taxon>Gunneridae</taxon>
        <taxon>Pentapetalae</taxon>
        <taxon>rosids</taxon>
        <taxon>fabids</taxon>
        <taxon>Fabales</taxon>
        <taxon>Fabaceae</taxon>
        <taxon>Papilionoideae</taxon>
        <taxon>50 kb inversion clade</taxon>
        <taxon>NPAAA clade</taxon>
        <taxon>Hologalegina</taxon>
        <taxon>IRL clade</taxon>
        <taxon>Fabeae</taxon>
        <taxon>Pisum</taxon>
    </lineage>
</organism>
<reference key="1">
    <citation type="journal article" date="1998" name="Plant J.">
        <title>Identification of cDNAS encoding plastid-targeted glutathione peroxidase.</title>
        <authorList>
            <person name="Mullineaux P.M."/>
            <person name="Karpinski S."/>
            <person name="Jimenez A."/>
            <person name="Cleary S.P."/>
            <person name="Robinson C."/>
            <person name="Creissen G.P."/>
        </authorList>
    </citation>
    <scope>NUCLEOTIDE SEQUENCE [MRNA]</scope>
    <source>
        <strain>cv. Birte</strain>
    </source>
</reference>
<feature type="transit peptide" description="Chloroplast" evidence="3">
    <location>
        <begin position="1"/>
        <end position="64"/>
    </location>
</feature>
<feature type="chain" id="PRO_0000013087" description="Phospholipid hydroperoxide glutathione peroxidase, chloroplastic">
    <location>
        <begin position="65"/>
        <end position="236"/>
    </location>
</feature>
<feature type="active site" evidence="2">
    <location>
        <position position="111"/>
    </location>
</feature>
<sequence length="236" mass="26400">MASMAFSTTFFTPLRDFNQPRTNSTPSTSLPFTKSSIASSKSPFFQLGFSQQASSNFPIVPSKTRSFSVNAKAIKDKTIYDFTVKDIDKKDVSLSKFKGKVLLIVNVASRCGLTSSNYTELSHLYENFKNKGLEVLAFPCNQFGMQEPGSNEEIKQFACTKFKAEFPIFDKVDVNGPFTAPVYQFLKSSSGGFFGDIVKWNFEKFLVDKNGKVVERYPPTTSPFQIEKDIQKLLAA</sequence>
<protein>
    <recommendedName>
        <fullName>Phospholipid hydroperoxide glutathione peroxidase, chloroplastic</fullName>
        <shortName>PHGPx</shortName>
        <ecNumber>1.11.1.12</ecNumber>
    </recommendedName>
</protein>
<accession>O24296</accession>
<keyword id="KW-0150">Chloroplast</keyword>
<keyword id="KW-0560">Oxidoreductase</keyword>
<keyword id="KW-0575">Peroxidase</keyword>
<keyword id="KW-0934">Plastid</keyword>
<keyword id="KW-0809">Transit peptide</keyword>
<dbReference type="EC" id="1.11.1.12"/>
<dbReference type="EMBL" id="AJ000508">
    <property type="protein sequence ID" value="CAA04142.1"/>
    <property type="molecule type" value="mRNA"/>
</dbReference>
<dbReference type="PIR" id="T06462">
    <property type="entry name" value="T06462"/>
</dbReference>
<dbReference type="RefSeq" id="NP_001413902.1">
    <property type="nucleotide sequence ID" value="NM_001426973.1"/>
</dbReference>
<dbReference type="SMR" id="O24296"/>
<dbReference type="PeroxiBase" id="2897">
    <property type="entry name" value="PsGPx01"/>
</dbReference>
<dbReference type="EnsemblPlants" id="Psat6g026280.1">
    <property type="protein sequence ID" value="Psat6g026280.1.cds"/>
    <property type="gene ID" value="Psat6g026280"/>
</dbReference>
<dbReference type="GeneID" id="127098179"/>
<dbReference type="Gramene" id="Psat6g026280.1">
    <property type="protein sequence ID" value="Psat6g026280.1.cds"/>
    <property type="gene ID" value="Psat6g026280"/>
</dbReference>
<dbReference type="OrthoDB" id="446890at2759"/>
<dbReference type="GO" id="GO:0009570">
    <property type="term" value="C:chloroplast stroma"/>
    <property type="evidence" value="ECO:0007669"/>
    <property type="project" value="UniProtKB-SubCell"/>
</dbReference>
<dbReference type="GO" id="GO:0047066">
    <property type="term" value="F:phospholipid-hydroperoxide glutathione peroxidase activity"/>
    <property type="evidence" value="ECO:0007669"/>
    <property type="project" value="UniProtKB-EC"/>
</dbReference>
<dbReference type="GO" id="GO:0006979">
    <property type="term" value="P:response to oxidative stress"/>
    <property type="evidence" value="ECO:0007669"/>
    <property type="project" value="InterPro"/>
</dbReference>
<dbReference type="CDD" id="cd00340">
    <property type="entry name" value="GSH_Peroxidase"/>
    <property type="match status" value="1"/>
</dbReference>
<dbReference type="FunFam" id="3.40.30.10:FF:000025">
    <property type="entry name" value="Glutathione peroxidase"/>
    <property type="match status" value="1"/>
</dbReference>
<dbReference type="Gene3D" id="3.40.30.10">
    <property type="entry name" value="Glutaredoxin"/>
    <property type="match status" value="1"/>
</dbReference>
<dbReference type="InterPro" id="IPR000889">
    <property type="entry name" value="Glutathione_peroxidase"/>
</dbReference>
<dbReference type="InterPro" id="IPR029759">
    <property type="entry name" value="GPX_AS"/>
</dbReference>
<dbReference type="InterPro" id="IPR029760">
    <property type="entry name" value="GPX_CS"/>
</dbReference>
<dbReference type="InterPro" id="IPR036249">
    <property type="entry name" value="Thioredoxin-like_sf"/>
</dbReference>
<dbReference type="InterPro" id="IPR013766">
    <property type="entry name" value="Thioredoxin_domain"/>
</dbReference>
<dbReference type="PANTHER" id="PTHR11592">
    <property type="entry name" value="GLUTATHIONE PEROXIDASE"/>
    <property type="match status" value="1"/>
</dbReference>
<dbReference type="PANTHER" id="PTHR11592:SF132">
    <property type="entry name" value="GLUTATHIONE PEROXIDASE 7, CHLOROPLASTIC-RELATED"/>
    <property type="match status" value="1"/>
</dbReference>
<dbReference type="Pfam" id="PF00255">
    <property type="entry name" value="GSHPx"/>
    <property type="match status" value="1"/>
</dbReference>
<dbReference type="PRINTS" id="PR01011">
    <property type="entry name" value="GLUTPROXDASE"/>
</dbReference>
<dbReference type="SUPFAM" id="SSF52833">
    <property type="entry name" value="Thioredoxin-like"/>
    <property type="match status" value="1"/>
</dbReference>
<dbReference type="PROSITE" id="PS00460">
    <property type="entry name" value="GLUTATHIONE_PEROXID_1"/>
    <property type="match status" value="1"/>
</dbReference>
<dbReference type="PROSITE" id="PS00763">
    <property type="entry name" value="GLUTATHIONE_PEROXID_2"/>
    <property type="match status" value="1"/>
</dbReference>
<dbReference type="PROSITE" id="PS51355">
    <property type="entry name" value="GLUTATHIONE_PEROXID_3"/>
    <property type="match status" value="1"/>
</dbReference>
<comment type="function">
    <text evidence="1">Protects cells and enzymes from oxidative damage, by catalyzing the reduction of hydrogen peroxide, lipid peroxides and organic hydroperoxide, by glutathione.</text>
</comment>
<comment type="catalytic activity">
    <reaction evidence="2">
        <text>a hydroperoxy polyunsaturated fatty acid + 2 glutathione = a hydroxy polyunsaturated fatty acid + glutathione disulfide + H2O</text>
        <dbReference type="Rhea" id="RHEA:19057"/>
        <dbReference type="ChEBI" id="CHEBI:15377"/>
        <dbReference type="ChEBI" id="CHEBI:57925"/>
        <dbReference type="ChEBI" id="CHEBI:58297"/>
        <dbReference type="ChEBI" id="CHEBI:131871"/>
        <dbReference type="ChEBI" id="CHEBI:134019"/>
        <dbReference type="EC" id="1.11.1.12"/>
    </reaction>
</comment>
<comment type="subcellular location">
    <subcellularLocation>
        <location>Plastid</location>
        <location>Chloroplast stroma</location>
    </subcellularLocation>
</comment>
<comment type="similarity">
    <text evidence="4">Belongs to the glutathione peroxidase family.</text>
</comment>
<proteinExistence type="evidence at transcript level"/>
<name>GPX1_PEA</name>